<comment type="function">
    <text evidence="1">Vacuolar aspartic endopeptidase which is probably also secreted and contributes to virulence.</text>
</comment>
<comment type="catalytic activity">
    <reaction>
        <text>Hydrolysis of proteins with broad specificity for peptide bonds. Cleaves -Leu-Leu-|-Val-Tyr- bond in a synthetic substrate. Does not act on esters of Tyr or Arg.</text>
        <dbReference type="EC" id="3.4.23.25"/>
    </reaction>
</comment>
<comment type="subcellular location">
    <subcellularLocation>
        <location>Vacuole lumen</location>
    </subcellularLocation>
    <subcellularLocation>
        <location evidence="5">Secreted</location>
    </subcellularLocation>
</comment>
<comment type="similarity">
    <text evidence="5">Belongs to the peptidase A1 family.</text>
</comment>
<protein>
    <recommendedName>
        <fullName>Vacuolar protease A</fullName>
        <ecNumber>3.4.23.25</ecNumber>
    </recommendedName>
    <alternativeName>
        <fullName>Aspartic endopeptidase PEP2</fullName>
    </alternativeName>
    <alternativeName>
        <fullName>Aspartic protease PEP2</fullName>
    </alternativeName>
</protein>
<dbReference type="EC" id="3.4.23.25"/>
<dbReference type="EMBL" id="DS995705">
    <property type="protein sequence ID" value="EEQ32708.1"/>
    <property type="molecule type" value="Genomic_DNA"/>
</dbReference>
<dbReference type="RefSeq" id="XP_002845658.1">
    <property type="nucleotide sequence ID" value="XM_002845612.1"/>
</dbReference>
<dbReference type="SMR" id="C5FS55"/>
<dbReference type="STRING" id="554155.C5FS55"/>
<dbReference type="MEROPS" id="A01.018"/>
<dbReference type="GlyCosmos" id="C5FS55">
    <property type="glycosylation" value="2 sites, No reported glycans"/>
</dbReference>
<dbReference type="GeneID" id="9224665"/>
<dbReference type="VEuPathDB" id="FungiDB:MCYG_05527"/>
<dbReference type="eggNOG" id="KOG1339">
    <property type="taxonomic scope" value="Eukaryota"/>
</dbReference>
<dbReference type="HOGENOM" id="CLU_013253_3_4_1"/>
<dbReference type="OMA" id="KYDHDAS"/>
<dbReference type="OrthoDB" id="771136at2759"/>
<dbReference type="Proteomes" id="UP000002035">
    <property type="component" value="Unassembled WGS sequence"/>
</dbReference>
<dbReference type="GO" id="GO:0005576">
    <property type="term" value="C:extracellular region"/>
    <property type="evidence" value="ECO:0007669"/>
    <property type="project" value="UniProtKB-SubCell"/>
</dbReference>
<dbReference type="GO" id="GO:0000324">
    <property type="term" value="C:fungal-type vacuole"/>
    <property type="evidence" value="ECO:0007669"/>
    <property type="project" value="TreeGrafter"/>
</dbReference>
<dbReference type="GO" id="GO:0005775">
    <property type="term" value="C:vacuolar lumen"/>
    <property type="evidence" value="ECO:0007669"/>
    <property type="project" value="UniProtKB-SubCell"/>
</dbReference>
<dbReference type="GO" id="GO:0004190">
    <property type="term" value="F:aspartic-type endopeptidase activity"/>
    <property type="evidence" value="ECO:0007669"/>
    <property type="project" value="UniProtKB-KW"/>
</dbReference>
<dbReference type="GO" id="GO:0006508">
    <property type="term" value="P:proteolysis"/>
    <property type="evidence" value="ECO:0007669"/>
    <property type="project" value="UniProtKB-KW"/>
</dbReference>
<dbReference type="FunFam" id="2.40.70.10:FF:000036">
    <property type="entry name" value="Vacuolar aspartic protease"/>
    <property type="match status" value="1"/>
</dbReference>
<dbReference type="FunFam" id="2.40.70.10:FF:000002">
    <property type="entry name" value="Vacuolar aspartic proteinase"/>
    <property type="match status" value="1"/>
</dbReference>
<dbReference type="Gene3D" id="2.40.70.10">
    <property type="entry name" value="Acid Proteases"/>
    <property type="match status" value="2"/>
</dbReference>
<dbReference type="InterPro" id="IPR001461">
    <property type="entry name" value="Aspartic_peptidase_A1"/>
</dbReference>
<dbReference type="InterPro" id="IPR001969">
    <property type="entry name" value="Aspartic_peptidase_AS"/>
</dbReference>
<dbReference type="InterPro" id="IPR033121">
    <property type="entry name" value="PEPTIDASE_A1"/>
</dbReference>
<dbReference type="InterPro" id="IPR021109">
    <property type="entry name" value="Peptidase_aspartic_dom_sf"/>
</dbReference>
<dbReference type="PANTHER" id="PTHR47966">
    <property type="entry name" value="BETA-SITE APP-CLEAVING ENZYME, ISOFORM A-RELATED"/>
    <property type="match status" value="1"/>
</dbReference>
<dbReference type="PANTHER" id="PTHR47966:SF51">
    <property type="entry name" value="BETA-SITE APP-CLEAVING ENZYME, ISOFORM A-RELATED"/>
    <property type="match status" value="1"/>
</dbReference>
<dbReference type="Pfam" id="PF00026">
    <property type="entry name" value="Asp"/>
    <property type="match status" value="1"/>
</dbReference>
<dbReference type="PRINTS" id="PR00792">
    <property type="entry name" value="PEPSIN"/>
</dbReference>
<dbReference type="SUPFAM" id="SSF50630">
    <property type="entry name" value="Acid proteases"/>
    <property type="match status" value="1"/>
</dbReference>
<dbReference type="PROSITE" id="PS00141">
    <property type="entry name" value="ASP_PROTEASE"/>
    <property type="match status" value="2"/>
</dbReference>
<dbReference type="PROSITE" id="PS51767">
    <property type="entry name" value="PEPTIDASE_A1"/>
    <property type="match status" value="1"/>
</dbReference>
<proteinExistence type="inferred from homology"/>
<reference key="1">
    <citation type="journal article" date="2012" name="MBio">
        <title>Comparative genome analysis of Trichophyton rubrum and related dermatophytes reveals candidate genes involved in infection.</title>
        <authorList>
            <person name="Martinez D.A."/>
            <person name="Oliver B.G."/>
            <person name="Graeser Y."/>
            <person name="Goldberg J.M."/>
            <person name="Li W."/>
            <person name="Martinez-Rossi N.M."/>
            <person name="Monod M."/>
            <person name="Shelest E."/>
            <person name="Barton R.C."/>
            <person name="Birch E."/>
            <person name="Brakhage A.A."/>
            <person name="Chen Z."/>
            <person name="Gurr S.J."/>
            <person name="Heiman D."/>
            <person name="Heitman J."/>
            <person name="Kosti I."/>
            <person name="Rossi A."/>
            <person name="Saif S."/>
            <person name="Samalova M."/>
            <person name="Saunders C.W."/>
            <person name="Shea T."/>
            <person name="Summerbell R.C."/>
            <person name="Xu J."/>
            <person name="Young S."/>
            <person name="Zeng Q."/>
            <person name="Birren B.W."/>
            <person name="Cuomo C.A."/>
            <person name="White T.C."/>
        </authorList>
    </citation>
    <scope>NUCLEOTIDE SEQUENCE [LARGE SCALE GENOMIC DNA]</scope>
    <source>
        <strain>ATCC MYA-4605 / CBS 113480</strain>
    </source>
</reference>
<gene>
    <name type="primary">PEP2</name>
    <name type="ORF">MCYG_05527</name>
</gene>
<feature type="signal peptide" evidence="2">
    <location>
        <begin position="1"/>
        <end position="18"/>
    </location>
</feature>
<feature type="propeptide" id="PRO_0000388448" description="Activation peptide" evidence="1">
    <location>
        <begin position="19"/>
        <end position="72"/>
    </location>
</feature>
<feature type="chain" id="PRO_0000388449" description="Vacuolar protease A">
    <location>
        <begin position="73"/>
        <end position="395"/>
    </location>
</feature>
<feature type="domain" description="Peptidase A1" evidence="3">
    <location>
        <begin position="87"/>
        <end position="392"/>
    </location>
</feature>
<feature type="active site" evidence="4">
    <location>
        <position position="105"/>
    </location>
</feature>
<feature type="active site" evidence="4">
    <location>
        <position position="289"/>
    </location>
</feature>
<feature type="glycosylation site" description="N-linked (GlcNAc...) asparagine" evidence="2">
    <location>
        <position position="140"/>
    </location>
</feature>
<feature type="glycosylation site" description="N-linked (GlcNAc...) asparagine" evidence="2">
    <location>
        <position position="335"/>
    </location>
</feature>
<feature type="disulfide bond" evidence="1">
    <location>
        <begin position="118"/>
        <end position="123"/>
    </location>
</feature>
<feature type="disulfide bond" evidence="1">
    <location>
        <begin position="318"/>
        <end position="351"/>
    </location>
</feature>
<organism>
    <name type="scientific">Arthroderma otae (strain ATCC MYA-4605 / CBS 113480)</name>
    <name type="common">Microsporum canis</name>
    <dbReference type="NCBI Taxonomy" id="554155"/>
    <lineage>
        <taxon>Eukaryota</taxon>
        <taxon>Fungi</taxon>
        <taxon>Dikarya</taxon>
        <taxon>Ascomycota</taxon>
        <taxon>Pezizomycotina</taxon>
        <taxon>Eurotiomycetes</taxon>
        <taxon>Eurotiomycetidae</taxon>
        <taxon>Onygenales</taxon>
        <taxon>Arthrodermataceae</taxon>
        <taxon>Microsporum</taxon>
    </lineage>
</organism>
<name>CARP_ARTOC</name>
<accession>C5FS55</accession>
<keyword id="KW-0064">Aspartyl protease</keyword>
<keyword id="KW-1015">Disulfide bond</keyword>
<keyword id="KW-0325">Glycoprotein</keyword>
<keyword id="KW-0378">Hydrolase</keyword>
<keyword id="KW-0645">Protease</keyword>
<keyword id="KW-1185">Reference proteome</keyword>
<keyword id="KW-0964">Secreted</keyword>
<keyword id="KW-0732">Signal</keyword>
<keyword id="KW-0926">Vacuole</keyword>
<keyword id="KW-0865">Zymogen</keyword>
<sequence length="395" mass="43077">MKGSLLLAGATLLGCTSAKLHSLKLKKVSLKEQLEHADIDVQIKSLGQKYMGIRPGQHEQQMFKEQTPIEAESGHNVLIDNFLNAQYFSEISIGTPPQTFKVVLDTGSSNLWVPGKDCSSIACFLHSTYDSSASSTFTRNGTSFAIRYGSGSLEGFVSQDNVQIGDMKIKNQLFAEATSEPGLAFAFGRFDGILGMGYDTISVNKITPPFYKMVEQGLVDEPVFSFYLGDTNKDGDQSVVTFGGADKSHYTGDITTIPLRRKAYWEVEFNAITLGKDTATLDNTGIILDTGTSLIALPTTYAEMIISKSWNGQYTIDCAKRDSLPDLTFTLSGHNFTIGPYDYTLEVSGTCISSFMGMDFPEPVGPLAILGDSFLRRWYSVYDLGKGTVGLAKAK</sequence>
<evidence type="ECO:0000250" key="1"/>
<evidence type="ECO:0000255" key="2"/>
<evidence type="ECO:0000255" key="3">
    <source>
        <dbReference type="PROSITE-ProRule" id="PRU01103"/>
    </source>
</evidence>
<evidence type="ECO:0000255" key="4">
    <source>
        <dbReference type="PROSITE-ProRule" id="PRU10094"/>
    </source>
</evidence>
<evidence type="ECO:0000305" key="5"/>